<protein>
    <recommendedName>
        <fullName>Acyl-coenzyme A diphosphatase NUDT19</fullName>
        <ecNumber>3.6.1.-</ecNumber>
        <ecNumber evidence="1">3.6.1.77</ecNumber>
    </recommendedName>
    <alternativeName>
        <fullName>Nucleoside diphosphate-linked moiety X motif 19</fullName>
        <shortName>Nudix motif 19</shortName>
    </alternativeName>
</protein>
<evidence type="ECO:0000250" key="1">
    <source>
        <dbReference type="UniProtKB" id="P11930"/>
    </source>
</evidence>
<evidence type="ECO:0000255" key="2"/>
<evidence type="ECO:0000255" key="3">
    <source>
        <dbReference type="PROSITE-ProRule" id="PRU00794"/>
    </source>
</evidence>
<evidence type="ECO:0000256" key="4">
    <source>
        <dbReference type="SAM" id="MobiDB-lite"/>
    </source>
</evidence>
<evidence type="ECO:0000305" key="5"/>
<name>NUD19_HUMAN</name>
<accession>A8MXV4</accession>
<proteinExistence type="evidence at protein level"/>
<gene>
    <name type="primary">NUDT19</name>
</gene>
<keyword id="KW-0378">Hydrolase</keyword>
<keyword id="KW-0460">Magnesium</keyword>
<keyword id="KW-0464">Manganese</keyword>
<keyword id="KW-0479">Metal-binding</keyword>
<keyword id="KW-0576">Peroxisome</keyword>
<keyword id="KW-1267">Proteomics identification</keyword>
<keyword id="KW-1185">Reference proteome</keyword>
<dbReference type="EC" id="3.6.1.-"/>
<dbReference type="EC" id="3.6.1.77" evidence="1"/>
<dbReference type="EMBL" id="AC008736">
    <property type="status" value="NOT_ANNOTATED_CDS"/>
    <property type="molecule type" value="Genomic_DNA"/>
</dbReference>
<dbReference type="CCDS" id="CCDS42543.1"/>
<dbReference type="RefSeq" id="NP_001099040.1">
    <property type="nucleotide sequence ID" value="NM_001105570.2"/>
</dbReference>
<dbReference type="BioGRID" id="133735">
    <property type="interactions" value="151"/>
</dbReference>
<dbReference type="FunCoup" id="A8MXV4">
    <property type="interactions" value="741"/>
</dbReference>
<dbReference type="IntAct" id="A8MXV4">
    <property type="interactions" value="46"/>
</dbReference>
<dbReference type="MINT" id="A8MXV4"/>
<dbReference type="STRING" id="9606.ENSP00000380251"/>
<dbReference type="iPTMnet" id="A8MXV4"/>
<dbReference type="PhosphoSitePlus" id="A8MXV4"/>
<dbReference type="SwissPalm" id="A8MXV4"/>
<dbReference type="BioMuta" id="NUDT19"/>
<dbReference type="jPOST" id="A8MXV4"/>
<dbReference type="MassIVE" id="A8MXV4"/>
<dbReference type="PaxDb" id="9606-ENSP00000380251"/>
<dbReference type="PeptideAtlas" id="A8MXV4"/>
<dbReference type="ProteomicsDB" id="2356"/>
<dbReference type="Pumba" id="A8MXV4"/>
<dbReference type="Antibodypedia" id="44300">
    <property type="antibodies" value="100 antibodies from 20 providers"/>
</dbReference>
<dbReference type="DNASU" id="390916"/>
<dbReference type="Ensembl" id="ENST00000397061.4">
    <property type="protein sequence ID" value="ENSP00000380251.2"/>
    <property type="gene ID" value="ENSG00000213965.4"/>
</dbReference>
<dbReference type="GeneID" id="390916"/>
<dbReference type="KEGG" id="hsa:390916"/>
<dbReference type="MANE-Select" id="ENST00000397061.4">
    <property type="protein sequence ID" value="ENSP00000380251.2"/>
    <property type="RefSeq nucleotide sequence ID" value="NM_001105570.2"/>
    <property type="RefSeq protein sequence ID" value="NP_001099040.1"/>
</dbReference>
<dbReference type="UCSC" id="uc010edf.3">
    <property type="organism name" value="human"/>
</dbReference>
<dbReference type="AGR" id="HGNC:32036"/>
<dbReference type="CTD" id="390916"/>
<dbReference type="DisGeNET" id="390916"/>
<dbReference type="GeneCards" id="NUDT19"/>
<dbReference type="HGNC" id="HGNC:32036">
    <property type="gene designation" value="NUDT19"/>
</dbReference>
<dbReference type="HPA" id="ENSG00000213965">
    <property type="expression patterns" value="Low tissue specificity"/>
</dbReference>
<dbReference type="neXtProt" id="NX_A8MXV4"/>
<dbReference type="OpenTargets" id="ENSG00000213965"/>
<dbReference type="PharmGKB" id="PA142671239"/>
<dbReference type="VEuPathDB" id="HostDB:ENSG00000213965"/>
<dbReference type="eggNOG" id="KOG3904">
    <property type="taxonomic scope" value="Eukaryota"/>
</dbReference>
<dbReference type="GeneTree" id="ENSGT00420000029858"/>
<dbReference type="HOGENOM" id="CLU_059078_1_0_1"/>
<dbReference type="InParanoid" id="A8MXV4"/>
<dbReference type="OMA" id="PDTDDHK"/>
<dbReference type="OrthoDB" id="1695362at2759"/>
<dbReference type="PAN-GO" id="A8MXV4">
    <property type="GO annotations" value="0 GO annotations based on evolutionary models"/>
</dbReference>
<dbReference type="PhylomeDB" id="A8MXV4"/>
<dbReference type="TreeFam" id="TF313185"/>
<dbReference type="PathwayCommons" id="A8MXV4"/>
<dbReference type="Reactome" id="R-HSA-390918">
    <property type="pathway name" value="Peroxisomal lipid metabolism"/>
</dbReference>
<dbReference type="Reactome" id="R-HSA-9033241">
    <property type="pathway name" value="Peroxisomal protein import"/>
</dbReference>
<dbReference type="SignaLink" id="A8MXV4"/>
<dbReference type="BioGRID-ORCS" id="390916">
    <property type="hits" value="14 hits in 1159 CRISPR screens"/>
</dbReference>
<dbReference type="ChiTaRS" id="NUDT19">
    <property type="organism name" value="human"/>
</dbReference>
<dbReference type="GenomeRNAi" id="390916"/>
<dbReference type="Pharos" id="A8MXV4">
    <property type="development level" value="Tdark"/>
</dbReference>
<dbReference type="PRO" id="PR:A8MXV4"/>
<dbReference type="Proteomes" id="UP000005640">
    <property type="component" value="Chromosome 19"/>
</dbReference>
<dbReference type="RNAct" id="A8MXV4">
    <property type="molecule type" value="protein"/>
</dbReference>
<dbReference type="Bgee" id="ENSG00000213965">
    <property type="expression patterns" value="Expressed in vastus lateralis and 187 other cell types or tissues"/>
</dbReference>
<dbReference type="GO" id="GO:0005829">
    <property type="term" value="C:cytosol"/>
    <property type="evidence" value="ECO:0000304"/>
    <property type="project" value="Reactome"/>
</dbReference>
<dbReference type="GO" id="GO:0005739">
    <property type="term" value="C:mitochondrion"/>
    <property type="evidence" value="ECO:0006056"/>
    <property type="project" value="FlyBase"/>
</dbReference>
<dbReference type="GO" id="GO:0005782">
    <property type="term" value="C:peroxisomal matrix"/>
    <property type="evidence" value="ECO:0000304"/>
    <property type="project" value="Reactome"/>
</dbReference>
<dbReference type="GO" id="GO:0010945">
    <property type="term" value="F:coenzyme A diphosphatase activity"/>
    <property type="evidence" value="ECO:0000304"/>
    <property type="project" value="Reactome"/>
</dbReference>
<dbReference type="GO" id="GO:0000287">
    <property type="term" value="F:magnesium ion binding"/>
    <property type="evidence" value="ECO:0000250"/>
    <property type="project" value="UniProtKB"/>
</dbReference>
<dbReference type="GO" id="GO:0044580">
    <property type="term" value="P:butyryl-CoA catabolic process"/>
    <property type="evidence" value="ECO:0000250"/>
    <property type="project" value="UniProtKB"/>
</dbReference>
<dbReference type="GO" id="GO:0015938">
    <property type="term" value="P:coenzyme A catabolic process"/>
    <property type="evidence" value="ECO:0000250"/>
    <property type="project" value="UniProtKB"/>
</dbReference>
<dbReference type="GO" id="GO:0009062">
    <property type="term" value="P:fatty acid catabolic process"/>
    <property type="evidence" value="ECO:0000304"/>
    <property type="project" value="Reactome"/>
</dbReference>
<dbReference type="GO" id="GO:2001294">
    <property type="term" value="P:malonyl-CoA catabolic process"/>
    <property type="evidence" value="ECO:0000250"/>
    <property type="project" value="UniProtKB"/>
</dbReference>
<dbReference type="GO" id="GO:0036114">
    <property type="term" value="P:medium-chain fatty-acyl-CoA catabolic process"/>
    <property type="evidence" value="ECO:0000250"/>
    <property type="project" value="UniProtKB"/>
</dbReference>
<dbReference type="GO" id="GO:1902858">
    <property type="term" value="P:propionyl-CoA metabolic process"/>
    <property type="evidence" value="ECO:0000250"/>
    <property type="project" value="UniProtKB"/>
</dbReference>
<dbReference type="GO" id="GO:1901289">
    <property type="term" value="P:succinyl-CoA catabolic process"/>
    <property type="evidence" value="ECO:0000250"/>
    <property type="project" value="UniProtKB"/>
</dbReference>
<dbReference type="CDD" id="cd18870">
    <property type="entry name" value="NUDIX_AcylCoAdiphos_Nudt19"/>
    <property type="match status" value="1"/>
</dbReference>
<dbReference type="Gene3D" id="3.90.79.10">
    <property type="entry name" value="Nucleoside Triphosphate Pyrophosphohydrolase"/>
    <property type="match status" value="1"/>
</dbReference>
<dbReference type="InterPro" id="IPR015797">
    <property type="entry name" value="NUDIX_hydrolase-like_dom_sf"/>
</dbReference>
<dbReference type="InterPro" id="IPR000086">
    <property type="entry name" value="NUDIX_hydrolase_dom"/>
</dbReference>
<dbReference type="InterPro" id="IPR039121">
    <property type="entry name" value="NUDT19"/>
</dbReference>
<dbReference type="PANTHER" id="PTHR12318:SF0">
    <property type="entry name" value="ACYL-COENZYME A DIPHOSPHATASE NUDT19"/>
    <property type="match status" value="1"/>
</dbReference>
<dbReference type="PANTHER" id="PTHR12318">
    <property type="entry name" value="TESTOSTERONE-REGULATED PROTEIN RP2"/>
    <property type="match status" value="1"/>
</dbReference>
<dbReference type="SUPFAM" id="SSF55811">
    <property type="entry name" value="Nudix"/>
    <property type="match status" value="1"/>
</dbReference>
<dbReference type="PROSITE" id="PS51462">
    <property type="entry name" value="NUDIX"/>
    <property type="match status" value="1"/>
</dbReference>
<reference key="1">
    <citation type="journal article" date="2004" name="Nature">
        <title>The DNA sequence and biology of human chromosome 19.</title>
        <authorList>
            <person name="Grimwood J."/>
            <person name="Gordon L.A."/>
            <person name="Olsen A.S."/>
            <person name="Terry A."/>
            <person name="Schmutz J."/>
            <person name="Lamerdin J.E."/>
            <person name="Hellsten U."/>
            <person name="Goodstein D."/>
            <person name="Couronne O."/>
            <person name="Tran-Gyamfi M."/>
            <person name="Aerts A."/>
            <person name="Altherr M."/>
            <person name="Ashworth L."/>
            <person name="Bajorek E."/>
            <person name="Black S."/>
            <person name="Branscomb E."/>
            <person name="Caenepeel S."/>
            <person name="Carrano A.V."/>
            <person name="Caoile C."/>
            <person name="Chan Y.M."/>
            <person name="Christensen M."/>
            <person name="Cleland C.A."/>
            <person name="Copeland A."/>
            <person name="Dalin E."/>
            <person name="Dehal P."/>
            <person name="Denys M."/>
            <person name="Detter J.C."/>
            <person name="Escobar J."/>
            <person name="Flowers D."/>
            <person name="Fotopulos D."/>
            <person name="Garcia C."/>
            <person name="Georgescu A.M."/>
            <person name="Glavina T."/>
            <person name="Gomez M."/>
            <person name="Gonzales E."/>
            <person name="Groza M."/>
            <person name="Hammon N."/>
            <person name="Hawkins T."/>
            <person name="Haydu L."/>
            <person name="Ho I."/>
            <person name="Huang W."/>
            <person name="Israni S."/>
            <person name="Jett J."/>
            <person name="Kadner K."/>
            <person name="Kimball H."/>
            <person name="Kobayashi A."/>
            <person name="Larionov V."/>
            <person name="Leem S.-H."/>
            <person name="Lopez F."/>
            <person name="Lou Y."/>
            <person name="Lowry S."/>
            <person name="Malfatti S."/>
            <person name="Martinez D."/>
            <person name="McCready P.M."/>
            <person name="Medina C."/>
            <person name="Morgan J."/>
            <person name="Nelson K."/>
            <person name="Nolan M."/>
            <person name="Ovcharenko I."/>
            <person name="Pitluck S."/>
            <person name="Pollard M."/>
            <person name="Popkie A.P."/>
            <person name="Predki P."/>
            <person name="Quan G."/>
            <person name="Ramirez L."/>
            <person name="Rash S."/>
            <person name="Retterer J."/>
            <person name="Rodriguez A."/>
            <person name="Rogers S."/>
            <person name="Salamov A."/>
            <person name="Salazar A."/>
            <person name="She X."/>
            <person name="Smith D."/>
            <person name="Slezak T."/>
            <person name="Solovyev V."/>
            <person name="Thayer N."/>
            <person name="Tice H."/>
            <person name="Tsai M."/>
            <person name="Ustaszewska A."/>
            <person name="Vo N."/>
            <person name="Wagner M."/>
            <person name="Wheeler J."/>
            <person name="Wu K."/>
            <person name="Xie G."/>
            <person name="Yang J."/>
            <person name="Dubchak I."/>
            <person name="Furey T.S."/>
            <person name="DeJong P."/>
            <person name="Dickson M."/>
            <person name="Gordon D."/>
            <person name="Eichler E.E."/>
            <person name="Pennacchio L.A."/>
            <person name="Richardson P."/>
            <person name="Stubbs L."/>
            <person name="Rokhsar D.S."/>
            <person name="Myers R.M."/>
            <person name="Rubin E.M."/>
            <person name="Lucas S.M."/>
        </authorList>
    </citation>
    <scope>NUCLEOTIDE SEQUENCE [LARGE SCALE GENOMIC DNA]</scope>
</reference>
<reference key="2">
    <citation type="journal article" date="2011" name="BMC Syst. Biol.">
        <title>Initial characterization of the human central proteome.</title>
        <authorList>
            <person name="Burkard T.R."/>
            <person name="Planyavsky M."/>
            <person name="Kaupe I."/>
            <person name="Breitwieser F.P."/>
            <person name="Buerckstuemmer T."/>
            <person name="Bennett K.L."/>
            <person name="Superti-Furga G."/>
            <person name="Colinge J."/>
        </authorList>
    </citation>
    <scope>IDENTIFICATION BY MASS SPECTROMETRY [LARGE SCALE ANALYSIS]</scope>
</reference>
<reference key="3">
    <citation type="journal article" date="2013" name="J. Proteome Res.">
        <title>Toward a comprehensive characterization of a human cancer cell phosphoproteome.</title>
        <authorList>
            <person name="Zhou H."/>
            <person name="Di Palma S."/>
            <person name="Preisinger C."/>
            <person name="Peng M."/>
            <person name="Polat A.N."/>
            <person name="Heck A.J."/>
            <person name="Mohammed S."/>
        </authorList>
    </citation>
    <scope>IDENTIFICATION BY MASS SPECTROMETRY [LARGE SCALE ANALYSIS]</scope>
    <source>
        <tissue>Erythroleukemia</tissue>
    </source>
</reference>
<reference key="4">
    <citation type="journal article" date="2015" name="Proteomics">
        <title>N-terminome analysis of the human mitochondrial proteome.</title>
        <authorList>
            <person name="Vaca Jacome A.S."/>
            <person name="Rabilloud T."/>
            <person name="Schaeffer-Reiss C."/>
            <person name="Rompais M."/>
            <person name="Ayoub D."/>
            <person name="Lane L."/>
            <person name="Bairoch A."/>
            <person name="Van Dorsselaer A."/>
            <person name="Carapito C."/>
        </authorList>
    </citation>
    <scope>IDENTIFICATION BY MASS SPECTROMETRY [LARGE SCALE ANALYSIS]</scope>
</reference>
<organism>
    <name type="scientific">Homo sapiens</name>
    <name type="common">Human</name>
    <dbReference type="NCBI Taxonomy" id="9606"/>
    <lineage>
        <taxon>Eukaryota</taxon>
        <taxon>Metazoa</taxon>
        <taxon>Chordata</taxon>
        <taxon>Craniata</taxon>
        <taxon>Vertebrata</taxon>
        <taxon>Euteleostomi</taxon>
        <taxon>Mammalia</taxon>
        <taxon>Eutheria</taxon>
        <taxon>Euarchontoglires</taxon>
        <taxon>Primates</taxon>
        <taxon>Haplorrhini</taxon>
        <taxon>Catarrhini</taxon>
        <taxon>Hominidae</taxon>
        <taxon>Homo</taxon>
    </lineage>
</organism>
<comment type="function">
    <text evidence="1">Fatty acyl-coenzyme A (CoA) diphosphatase that hydrolyzes fatty acyl-CoA to yield acyl-4'-phosphopantetheine and adenosine 3',5'-bisphosphate (By similarity). Mediates the hydrolysis of a wide range of CoA esters, including choloyl-CoA and branched-chain fatty-acyl-CoA esters and at low substrate concentrations medium and long-chain fatty-acyl-CoA esters are the primary substrates (By similarity). Highest activity seen with medium-chain acyl-CoA esters and higher rates of activity seen with the unsaturated acyl-CoA esters compared with the saturated esters (By similarity). Exhibits decapping activity towards dpCoA-capped RNAs in vitro (By similarity).</text>
</comment>
<comment type="catalytic activity">
    <reaction evidence="1">
        <text>an acyl-CoA + H2O = an acyl-4'-phosphopantetheine + adenosine 3',5'-bisphosphate + 2 H(+)</text>
        <dbReference type="Rhea" id="RHEA:50044"/>
        <dbReference type="ChEBI" id="CHEBI:15377"/>
        <dbReference type="ChEBI" id="CHEBI:15378"/>
        <dbReference type="ChEBI" id="CHEBI:58342"/>
        <dbReference type="ChEBI" id="CHEBI:58343"/>
        <dbReference type="ChEBI" id="CHEBI:132023"/>
    </reaction>
    <physiologicalReaction direction="left-to-right" evidence="1">
        <dbReference type="Rhea" id="RHEA:50045"/>
    </physiologicalReaction>
</comment>
<comment type="catalytic activity">
    <reaction evidence="1">
        <text>CoA + H2O = (R)-4'-phosphopantetheine + adenosine 3',5'-bisphosphate + 2 H(+)</text>
        <dbReference type="Rhea" id="RHEA:64988"/>
        <dbReference type="ChEBI" id="CHEBI:15377"/>
        <dbReference type="ChEBI" id="CHEBI:15378"/>
        <dbReference type="ChEBI" id="CHEBI:57287"/>
        <dbReference type="ChEBI" id="CHEBI:58343"/>
        <dbReference type="ChEBI" id="CHEBI:61723"/>
        <dbReference type="EC" id="3.6.1.77"/>
    </reaction>
    <physiologicalReaction direction="left-to-right" evidence="1">
        <dbReference type="Rhea" id="RHEA:64989"/>
    </physiologicalReaction>
</comment>
<comment type="catalytic activity">
    <reaction evidence="1">
        <text>hexanoyl-CoA + H2O = hexanoyl-4'-phosphopantetheine + adenosine 3',5'-bisphosphate + 2 H(+)</text>
        <dbReference type="Rhea" id="RHEA:49980"/>
        <dbReference type="ChEBI" id="CHEBI:15377"/>
        <dbReference type="ChEBI" id="CHEBI:15378"/>
        <dbReference type="ChEBI" id="CHEBI:58343"/>
        <dbReference type="ChEBI" id="CHEBI:62620"/>
        <dbReference type="ChEBI" id="CHEBI:132012"/>
    </reaction>
    <physiologicalReaction direction="left-to-right" evidence="1">
        <dbReference type="Rhea" id="RHEA:49981"/>
    </physiologicalReaction>
</comment>
<comment type="catalytic activity">
    <reaction evidence="1">
        <text>octanoyl-CoA + H2O = S-octanoyl-4'-phosphopantetheine + adenosine 3',5'-bisphosphate + 2 H(+)</text>
        <dbReference type="Rhea" id="RHEA:50016"/>
        <dbReference type="ChEBI" id="CHEBI:15377"/>
        <dbReference type="ChEBI" id="CHEBI:15378"/>
        <dbReference type="ChEBI" id="CHEBI:57386"/>
        <dbReference type="ChEBI" id="CHEBI:58343"/>
        <dbReference type="ChEBI" id="CHEBI:132013"/>
    </reaction>
    <physiologicalReaction direction="left-to-right" evidence="1">
        <dbReference type="Rhea" id="RHEA:50017"/>
    </physiologicalReaction>
</comment>
<comment type="catalytic activity">
    <reaction evidence="1">
        <text>butanoyl-CoA + H2O = S-butanoyl-4'-phosphopantetheine + adenosine 3',5'-bisphosphate + 2 H(+)</text>
        <dbReference type="Rhea" id="RHEA:49976"/>
        <dbReference type="ChEBI" id="CHEBI:15377"/>
        <dbReference type="ChEBI" id="CHEBI:15378"/>
        <dbReference type="ChEBI" id="CHEBI:57371"/>
        <dbReference type="ChEBI" id="CHEBI:58343"/>
        <dbReference type="ChEBI" id="CHEBI:132011"/>
    </reaction>
    <physiologicalReaction direction="left-to-right" evidence="1">
        <dbReference type="Rhea" id="RHEA:49977"/>
    </physiologicalReaction>
</comment>
<comment type="catalytic activity">
    <reaction evidence="1">
        <text>propanoyl-CoA + H2O = propanoyl-4'-phosphopantetheine + adenosine 3',5'-bisphosphate + 2 H(+)</text>
        <dbReference type="Rhea" id="RHEA:67464"/>
        <dbReference type="ChEBI" id="CHEBI:15377"/>
        <dbReference type="ChEBI" id="CHEBI:15378"/>
        <dbReference type="ChEBI" id="CHEBI:57392"/>
        <dbReference type="ChEBI" id="CHEBI:58343"/>
        <dbReference type="ChEBI" id="CHEBI:172362"/>
    </reaction>
    <physiologicalReaction direction="left-to-right" evidence="1">
        <dbReference type="Rhea" id="RHEA:67465"/>
    </physiologicalReaction>
</comment>
<comment type="catalytic activity">
    <reaction evidence="1">
        <text>malonyl-CoA + H2O = malonyl-4'-phosphopantetheine + adenosine 3',5'-bisphosphate + 2 H(+)</text>
        <dbReference type="Rhea" id="RHEA:67468"/>
        <dbReference type="ChEBI" id="CHEBI:15377"/>
        <dbReference type="ChEBI" id="CHEBI:15378"/>
        <dbReference type="ChEBI" id="CHEBI:57384"/>
        <dbReference type="ChEBI" id="CHEBI:58343"/>
        <dbReference type="ChEBI" id="CHEBI:172363"/>
    </reaction>
    <physiologicalReaction direction="left-to-right" evidence="1">
        <dbReference type="Rhea" id="RHEA:67469"/>
    </physiologicalReaction>
</comment>
<comment type="catalytic activity">
    <reaction evidence="1">
        <text>succinyl-CoA + H2O = succinyl-4'-phosphopantetheine + adenosine 3',5'-bisphosphate + 2 H(+)</text>
        <dbReference type="Rhea" id="RHEA:67472"/>
        <dbReference type="ChEBI" id="CHEBI:15377"/>
        <dbReference type="ChEBI" id="CHEBI:15378"/>
        <dbReference type="ChEBI" id="CHEBI:57292"/>
        <dbReference type="ChEBI" id="CHEBI:58343"/>
        <dbReference type="ChEBI" id="CHEBI:172364"/>
    </reaction>
    <physiologicalReaction direction="left-to-right" evidence="1">
        <dbReference type="Rhea" id="RHEA:67473"/>
    </physiologicalReaction>
</comment>
<comment type="catalytic activity">
    <reaction evidence="1">
        <text>choloyl-CoA + H2O = S-choloyl-4'-phosphopantetheine + adenosine 3',5'-bisphosphate + 2 H(+)</text>
        <dbReference type="Rhea" id="RHEA:50036"/>
        <dbReference type="ChEBI" id="CHEBI:15377"/>
        <dbReference type="ChEBI" id="CHEBI:15378"/>
        <dbReference type="ChEBI" id="CHEBI:57373"/>
        <dbReference type="ChEBI" id="CHEBI:58343"/>
        <dbReference type="ChEBI" id="CHEBI:132020"/>
    </reaction>
    <physiologicalReaction direction="left-to-right" evidence="1">
        <dbReference type="Rhea" id="RHEA:50037"/>
    </physiologicalReaction>
</comment>
<comment type="catalytic activity">
    <reaction evidence="1">
        <text>4,8-dimethylnonanoyl-CoA + H2O = S-(4,8-dimethylnonanoyl)-4'-phosphopantetheine + adenosine 3',5'-bisphosphate + 2 H(+)</text>
        <dbReference type="Rhea" id="RHEA:67524"/>
        <dbReference type="ChEBI" id="CHEBI:15377"/>
        <dbReference type="ChEBI" id="CHEBI:15378"/>
        <dbReference type="ChEBI" id="CHEBI:58343"/>
        <dbReference type="ChEBI" id="CHEBI:77061"/>
        <dbReference type="ChEBI" id="CHEBI:172385"/>
    </reaction>
    <physiologicalReaction direction="left-to-right" evidence="1">
        <dbReference type="Rhea" id="RHEA:67525"/>
    </physiologicalReaction>
</comment>
<comment type="catalytic activity">
    <reaction evidence="1">
        <text>(9Z,12Z,15Z)-octadecatrienoyl-CoA + H2O = S-(9Z,12Z,15Z-octadecatrienoyl)-4'-phosphopantetheine + adenosine 3',5'-bisphosphate + 2 H(+)</text>
        <dbReference type="Rhea" id="RHEA:67532"/>
        <dbReference type="ChEBI" id="CHEBI:15377"/>
        <dbReference type="ChEBI" id="CHEBI:15378"/>
        <dbReference type="ChEBI" id="CHEBI:58343"/>
        <dbReference type="ChEBI" id="CHEBI:74034"/>
        <dbReference type="ChEBI" id="CHEBI:172386"/>
    </reaction>
    <physiologicalReaction direction="left-to-right" evidence="1">
        <dbReference type="Rhea" id="RHEA:67533"/>
    </physiologicalReaction>
</comment>
<comment type="catalytic activity">
    <reaction evidence="1">
        <text>(9Z,12Z)-octadecadienoyl-CoA + H2O = S-(9Z,12Z-octadecadienoyl)-4'-phosphopantetheine + adenosine 3',5'-bisphosphate + 2 H(+)</text>
        <dbReference type="Rhea" id="RHEA:67536"/>
        <dbReference type="ChEBI" id="CHEBI:15377"/>
        <dbReference type="ChEBI" id="CHEBI:15378"/>
        <dbReference type="ChEBI" id="CHEBI:57383"/>
        <dbReference type="ChEBI" id="CHEBI:58343"/>
        <dbReference type="ChEBI" id="CHEBI:172387"/>
    </reaction>
    <physiologicalReaction direction="left-to-right" evidence="1">
        <dbReference type="Rhea" id="RHEA:67537"/>
    </physiologicalReaction>
</comment>
<comment type="catalytic activity">
    <reaction evidence="1">
        <text>(9Z)-hexadecenoyl-CoA + H2O = S-(9Z-hexadecenoyl)-4'-phosphopantetheine + adenosine 3',5'-bisphosphate + 2 H(+)</text>
        <dbReference type="Rhea" id="RHEA:67540"/>
        <dbReference type="ChEBI" id="CHEBI:15377"/>
        <dbReference type="ChEBI" id="CHEBI:15378"/>
        <dbReference type="ChEBI" id="CHEBI:58343"/>
        <dbReference type="ChEBI" id="CHEBI:61540"/>
        <dbReference type="ChEBI" id="CHEBI:172388"/>
    </reaction>
    <physiologicalReaction direction="left-to-right" evidence="1">
        <dbReference type="Rhea" id="RHEA:67541"/>
    </physiologicalReaction>
</comment>
<comment type="catalytic activity">
    <reaction evidence="1">
        <text>(9Z)-tetradecenoyl-CoA + H2O = S-(9Z-tetradecenoyl)-4'-phosphopantetheine + adenosine 3',5'-bisphosphate + 2 H(+)</text>
        <dbReference type="Rhea" id="RHEA:67544"/>
        <dbReference type="ChEBI" id="CHEBI:15377"/>
        <dbReference type="ChEBI" id="CHEBI:15378"/>
        <dbReference type="ChEBI" id="CHEBI:58343"/>
        <dbReference type="ChEBI" id="CHEBI:65060"/>
        <dbReference type="ChEBI" id="CHEBI:172389"/>
    </reaction>
    <physiologicalReaction direction="left-to-right" evidence="1">
        <dbReference type="Rhea" id="RHEA:67545"/>
    </physiologicalReaction>
</comment>
<comment type="catalytic activity">
    <reaction evidence="1">
        <text>(6Z)-octenoyl-CoA + H2O = S-(6Z-octenoyl)-4'-phosphopantetheine + adenosine 3',5'-bisphosphate + 2 H(+)</text>
        <dbReference type="Rhea" id="RHEA:67528"/>
        <dbReference type="ChEBI" id="CHEBI:15377"/>
        <dbReference type="ChEBI" id="CHEBI:15378"/>
        <dbReference type="ChEBI" id="CHEBI:58343"/>
        <dbReference type="ChEBI" id="CHEBI:172383"/>
        <dbReference type="ChEBI" id="CHEBI:172384"/>
    </reaction>
    <physiologicalReaction direction="left-to-right" evidence="1">
        <dbReference type="Rhea" id="RHEA:67529"/>
    </physiologicalReaction>
</comment>
<comment type="catalytic activity">
    <reaction evidence="1">
        <text>hexadecanoyl-CoA + H2O = S-hexadecanoyl-4'-phosphopantetheine + adenosine 3',5'-bisphosphate + 2 H(+)</text>
        <dbReference type="Rhea" id="RHEA:50032"/>
        <dbReference type="ChEBI" id="CHEBI:15377"/>
        <dbReference type="ChEBI" id="CHEBI:15378"/>
        <dbReference type="ChEBI" id="CHEBI:57379"/>
        <dbReference type="ChEBI" id="CHEBI:58343"/>
        <dbReference type="ChEBI" id="CHEBI:132018"/>
    </reaction>
    <physiologicalReaction direction="left-to-right" evidence="1">
        <dbReference type="Rhea" id="RHEA:50033"/>
    </physiologicalReaction>
</comment>
<comment type="catalytic activity">
    <reaction evidence="1">
        <text>tetradecanoyl-CoA + H2O = tetradecanoyl-4'-phosphopantetheine + adenosine 3',5'-bisphosphate + 2 H(+)</text>
        <dbReference type="Rhea" id="RHEA:50028"/>
        <dbReference type="ChEBI" id="CHEBI:15377"/>
        <dbReference type="ChEBI" id="CHEBI:15378"/>
        <dbReference type="ChEBI" id="CHEBI:57385"/>
        <dbReference type="ChEBI" id="CHEBI:58343"/>
        <dbReference type="ChEBI" id="CHEBI:132017"/>
    </reaction>
    <physiologicalReaction direction="left-to-right" evidence="1">
        <dbReference type="Rhea" id="RHEA:50029"/>
    </physiologicalReaction>
</comment>
<comment type="catalytic activity">
    <reaction evidence="1">
        <text>dodecanoyl-CoA + H2O = S-dodecanoyl-4'-phosphopantetheine + adenosine 3',5'-bisphosphate + 2 H(+)</text>
        <dbReference type="Rhea" id="RHEA:50024"/>
        <dbReference type="ChEBI" id="CHEBI:15377"/>
        <dbReference type="ChEBI" id="CHEBI:15378"/>
        <dbReference type="ChEBI" id="CHEBI:57375"/>
        <dbReference type="ChEBI" id="CHEBI:58343"/>
        <dbReference type="ChEBI" id="CHEBI:132015"/>
    </reaction>
    <physiologicalReaction direction="left-to-right" evidence="1">
        <dbReference type="Rhea" id="RHEA:50025"/>
    </physiologicalReaction>
</comment>
<comment type="catalytic activity">
    <reaction evidence="1">
        <text>a 5'-end CoA-ribonucleoside in mRNA + H2O = a 5'-end phospho-adenosine-phospho-ribonucleoside in mRNA + (R)-4'-phosphopantetheine + 2 H(+)</text>
        <dbReference type="Rhea" id="RHEA:67592"/>
        <dbReference type="Rhea" id="RHEA-COMP:15719"/>
        <dbReference type="Rhea" id="RHEA-COMP:17276"/>
        <dbReference type="ChEBI" id="CHEBI:15377"/>
        <dbReference type="ChEBI" id="CHEBI:15378"/>
        <dbReference type="ChEBI" id="CHEBI:61723"/>
        <dbReference type="ChEBI" id="CHEBI:144051"/>
        <dbReference type="ChEBI" id="CHEBI:172371"/>
    </reaction>
    <physiologicalReaction direction="left-to-right" evidence="1">
        <dbReference type="Rhea" id="RHEA:67593"/>
    </physiologicalReaction>
</comment>
<comment type="cofactor">
    <cofactor evidence="1">
        <name>Mg(2+)</name>
        <dbReference type="ChEBI" id="CHEBI:18420"/>
    </cofactor>
    <cofactor evidence="1">
        <name>Mn(2+)</name>
        <dbReference type="ChEBI" id="CHEBI:29035"/>
    </cofactor>
</comment>
<comment type="subunit">
    <text evidence="1">Monomer.</text>
</comment>
<comment type="subcellular location">
    <subcellularLocation>
        <location evidence="1">Peroxisome</location>
    </subcellularLocation>
</comment>
<comment type="similarity">
    <text evidence="5">Belongs to the Nudix hydrolase family.</text>
</comment>
<feature type="chain" id="PRO_0000324571" description="Acyl-coenzyme A diphosphatase NUDT19">
    <location>
        <begin position="1"/>
        <end position="375"/>
    </location>
</feature>
<feature type="domain" description="Nudix hydrolase" evidence="3">
    <location>
        <begin position="15"/>
        <end position="263"/>
    </location>
</feature>
<feature type="region of interest" description="Disordered" evidence="4">
    <location>
        <begin position="91"/>
        <end position="116"/>
    </location>
</feature>
<feature type="short sequence motif" description="Nudix box">
    <location>
        <begin position="116"/>
        <end position="137"/>
    </location>
</feature>
<feature type="short sequence motif" description="Microbody targeting signal" evidence="2">
    <location>
        <begin position="373"/>
        <end position="375"/>
    </location>
</feature>
<feature type="binding site" evidence="1">
    <location>
        <position position="131"/>
    </location>
    <ligand>
        <name>Mg(2+)</name>
        <dbReference type="ChEBI" id="CHEBI:18420"/>
    </ligand>
</feature>
<feature type="binding site" evidence="1">
    <location>
        <position position="135"/>
    </location>
    <ligand>
        <name>Mg(2+)</name>
        <dbReference type="ChEBI" id="CHEBI:18420"/>
    </ligand>
</feature>
<feature type="site" description="Important for coenzyme A binding" evidence="1">
    <location>
        <position position="49"/>
    </location>
</feature>
<feature type="site" description="Important for coenzyme A binding" evidence="1">
    <location>
        <position position="55"/>
    </location>
</feature>
<feature type="site" description="Important for coenzyme A binding" evidence="1">
    <location>
        <position position="210"/>
    </location>
</feature>
<feature type="sequence variant" id="VAR_039831" description="In dbSNP:rs912524277.">
    <original>R</original>
    <variation>Q</variation>
    <location>
        <position position="43"/>
    </location>
</feature>
<sequence length="375" mass="42233">MSSSLRPGPSRWRRAASIVLAAGWSRPETATPPSRPPPAEGFRLLLLQRSPHQGFMPGAHVFSGGVLDAADRSADWLGLFAPHHGPPRFGLGPAPFSRTAFPSLPDTDDHKTDNTGTLPEDVAFRICAVREAFEEAGVLLLRPRTSPPGPAPGPGLALEPPPGLASWRDRVRQDPRHFLRLCAHLDCTPDIWALHNWSAWLTPFLRGTTRRFDTAFFLCCLREPPPVYPDLAEVVGYQWSSPSEATESFLSKEIWLPPPQFYEVRRLANFASLSDLHKFCLGRALEGLERWLPIILLTADGMVHLLPGDELYLEDSDFLENLMSTEKKTEEIMKEGKQFHRIVTYHRHLYDIHVTVQPKYKHVYPKNSVVRKSHL</sequence>